<keyword id="KW-0028">Amino-acid biosynthesis</keyword>
<keyword id="KW-0456">Lyase</keyword>
<keyword id="KW-0663">Pyridoxal phosphate</keyword>
<keyword id="KW-1185">Reference proteome</keyword>
<keyword id="KW-0791">Threonine biosynthesis</keyword>
<organism>
    <name type="scientific">Mycobacterium bovis (strain ATCC BAA-935 / AF2122/97)</name>
    <dbReference type="NCBI Taxonomy" id="233413"/>
    <lineage>
        <taxon>Bacteria</taxon>
        <taxon>Bacillati</taxon>
        <taxon>Actinomycetota</taxon>
        <taxon>Actinomycetes</taxon>
        <taxon>Mycobacteriales</taxon>
        <taxon>Mycobacteriaceae</taxon>
        <taxon>Mycobacterium</taxon>
        <taxon>Mycobacterium tuberculosis complex</taxon>
    </lineage>
</organism>
<proteinExistence type="inferred from homology"/>
<reference key="1">
    <citation type="journal article" date="2003" name="Proc. Natl. Acad. Sci. U.S.A.">
        <title>The complete genome sequence of Mycobacterium bovis.</title>
        <authorList>
            <person name="Garnier T."/>
            <person name="Eiglmeier K."/>
            <person name="Camus J.-C."/>
            <person name="Medina N."/>
            <person name="Mansoor H."/>
            <person name="Pryor M."/>
            <person name="Duthoy S."/>
            <person name="Grondin S."/>
            <person name="Lacroix C."/>
            <person name="Monsempe C."/>
            <person name="Simon S."/>
            <person name="Harris B."/>
            <person name="Atkin R."/>
            <person name="Doggett J."/>
            <person name="Mayes R."/>
            <person name="Keating L."/>
            <person name="Wheeler P.R."/>
            <person name="Parkhill J."/>
            <person name="Barrell B.G."/>
            <person name="Cole S.T."/>
            <person name="Gordon S.V."/>
            <person name="Hewinson R.G."/>
        </authorList>
    </citation>
    <scope>NUCLEOTIDE SEQUENCE [LARGE SCALE GENOMIC DNA]</scope>
    <source>
        <strain>ATCC BAA-935 / AF2122/97</strain>
    </source>
</reference>
<reference key="2">
    <citation type="journal article" date="2017" name="Genome Announc.">
        <title>Updated reference genome sequence and annotation of Mycobacterium bovis AF2122/97.</title>
        <authorList>
            <person name="Malone K.M."/>
            <person name="Farrell D."/>
            <person name="Stuber T.P."/>
            <person name="Schubert O.T."/>
            <person name="Aebersold R."/>
            <person name="Robbe-Austerman S."/>
            <person name="Gordon S.V."/>
        </authorList>
    </citation>
    <scope>NUCLEOTIDE SEQUENCE [LARGE SCALE GENOMIC DNA]</scope>
    <scope>GENOME REANNOTATION</scope>
    <source>
        <strain>ATCC BAA-935 / AF2122/97</strain>
    </source>
</reference>
<gene>
    <name type="primary">thrC</name>
    <name type="ordered locus">BQ2027_MB1327</name>
</gene>
<comment type="function">
    <text evidence="1">Catalyzes the gamma-elimination of phosphate from L-phosphohomoserine and the beta-addition of water to produce L-threonine.</text>
</comment>
<comment type="catalytic activity">
    <reaction>
        <text>O-phospho-L-homoserine + H2O = L-threonine + phosphate</text>
        <dbReference type="Rhea" id="RHEA:10840"/>
        <dbReference type="ChEBI" id="CHEBI:15377"/>
        <dbReference type="ChEBI" id="CHEBI:43474"/>
        <dbReference type="ChEBI" id="CHEBI:57590"/>
        <dbReference type="ChEBI" id="CHEBI:57926"/>
        <dbReference type="EC" id="4.2.3.1"/>
    </reaction>
</comment>
<comment type="cofactor">
    <cofactor evidence="1">
        <name>pyridoxal 5'-phosphate</name>
        <dbReference type="ChEBI" id="CHEBI:597326"/>
    </cofactor>
</comment>
<comment type="pathway">
    <text>Amino-acid biosynthesis; L-threonine biosynthesis; L-threonine from L-aspartate: step 5/5.</text>
</comment>
<comment type="subunit">
    <text evidence="1">Homodimer.</text>
</comment>
<comment type="similarity">
    <text evidence="2">Belongs to the threonine synthase family.</text>
</comment>
<accession>P66903</accession>
<accession>A0A1R3XXX8</accession>
<accession>Q10610</accession>
<accession>X2BHF4</accession>
<sequence>MTVPPTATHQPWPGVIAAYRDRLPVGDDWTPVTLLEGGTPLIAATNLSKQTGCTIHLKVEGLNPTGSFKDRGMTMAVTDALAHGQRAVLCASTGNTSASAAAYAARAGITCAVLIPQGKIAMGKLAQAVMHGAKIIQIDGNFDDCLELARKMAADFPTISLVNSVNPVRIEGQKTAAFEIVDVLGTAPDVHALPVGNAGNITAYWKGYTEYHQLGLIDKLPRMLGTQAAGAAPLVLGEPVSHPETIATAIRIGSPASWTSAVEAQQQSKGRFLAASDEEILAAYHLVARVEGVFVEPASAASIAGLLKAIDDGWVARGSTVVCTVTGNGLKDPDTALKDMPSVSPVPVDPVAVVEKLGLA</sequence>
<dbReference type="EC" id="4.2.3.1"/>
<dbReference type="EMBL" id="LT708304">
    <property type="protein sequence ID" value="SIT99930.1"/>
    <property type="molecule type" value="Genomic_DNA"/>
</dbReference>
<dbReference type="RefSeq" id="NP_854981.1">
    <property type="nucleotide sequence ID" value="NC_002945.3"/>
</dbReference>
<dbReference type="RefSeq" id="WP_003406652.1">
    <property type="nucleotide sequence ID" value="NC_002945.4"/>
</dbReference>
<dbReference type="SMR" id="P66903"/>
<dbReference type="GeneID" id="45425269"/>
<dbReference type="KEGG" id="mbo:BQ2027_MB1327"/>
<dbReference type="PATRIC" id="fig|233413.5.peg.1453"/>
<dbReference type="UniPathway" id="UPA00050">
    <property type="reaction ID" value="UER00065"/>
</dbReference>
<dbReference type="Proteomes" id="UP000001419">
    <property type="component" value="Chromosome"/>
</dbReference>
<dbReference type="GO" id="GO:0003941">
    <property type="term" value="F:L-serine ammonia-lyase activity"/>
    <property type="evidence" value="ECO:0007669"/>
    <property type="project" value="TreeGrafter"/>
</dbReference>
<dbReference type="GO" id="GO:0030170">
    <property type="term" value="F:pyridoxal phosphate binding"/>
    <property type="evidence" value="ECO:0007669"/>
    <property type="project" value="InterPro"/>
</dbReference>
<dbReference type="GO" id="GO:0004794">
    <property type="term" value="F:threonine deaminase activity"/>
    <property type="evidence" value="ECO:0007669"/>
    <property type="project" value="TreeGrafter"/>
</dbReference>
<dbReference type="GO" id="GO:0004795">
    <property type="term" value="F:threonine synthase activity"/>
    <property type="evidence" value="ECO:0007669"/>
    <property type="project" value="UniProtKB-EC"/>
</dbReference>
<dbReference type="GO" id="GO:0009097">
    <property type="term" value="P:isoleucine biosynthetic process"/>
    <property type="evidence" value="ECO:0007669"/>
    <property type="project" value="TreeGrafter"/>
</dbReference>
<dbReference type="GO" id="GO:0006565">
    <property type="term" value="P:L-serine catabolic process"/>
    <property type="evidence" value="ECO:0007669"/>
    <property type="project" value="TreeGrafter"/>
</dbReference>
<dbReference type="GO" id="GO:0009088">
    <property type="term" value="P:threonine biosynthetic process"/>
    <property type="evidence" value="ECO:0007669"/>
    <property type="project" value="UniProtKB-UniPathway"/>
</dbReference>
<dbReference type="GO" id="GO:0006567">
    <property type="term" value="P:threonine catabolic process"/>
    <property type="evidence" value="ECO:0007669"/>
    <property type="project" value="TreeGrafter"/>
</dbReference>
<dbReference type="CDD" id="cd01563">
    <property type="entry name" value="Thr-synth_1"/>
    <property type="match status" value="1"/>
</dbReference>
<dbReference type="FunFam" id="3.40.50.1100:FF:000014">
    <property type="entry name" value="Threonine synthase"/>
    <property type="match status" value="1"/>
</dbReference>
<dbReference type="Gene3D" id="3.40.50.1100">
    <property type="match status" value="2"/>
</dbReference>
<dbReference type="InterPro" id="IPR050147">
    <property type="entry name" value="Ser/Thr_Dehydratase"/>
</dbReference>
<dbReference type="InterPro" id="IPR000634">
    <property type="entry name" value="Ser/Thr_deHydtase_PyrdxlP-BS"/>
</dbReference>
<dbReference type="InterPro" id="IPR004450">
    <property type="entry name" value="Thr_synthase-like"/>
</dbReference>
<dbReference type="InterPro" id="IPR026260">
    <property type="entry name" value="Thr_Synthase_bac/arc"/>
</dbReference>
<dbReference type="InterPro" id="IPR001926">
    <property type="entry name" value="TrpB-like_PALP"/>
</dbReference>
<dbReference type="InterPro" id="IPR036052">
    <property type="entry name" value="TrpB-like_PALP_sf"/>
</dbReference>
<dbReference type="NCBIfam" id="TIGR00260">
    <property type="entry name" value="thrC"/>
    <property type="match status" value="1"/>
</dbReference>
<dbReference type="PANTHER" id="PTHR48078:SF6">
    <property type="entry name" value="L-THREONINE DEHYDRATASE CATABOLIC TDCB"/>
    <property type="match status" value="1"/>
</dbReference>
<dbReference type="PANTHER" id="PTHR48078">
    <property type="entry name" value="THREONINE DEHYDRATASE, MITOCHONDRIAL-RELATED"/>
    <property type="match status" value="1"/>
</dbReference>
<dbReference type="Pfam" id="PF00291">
    <property type="entry name" value="PALP"/>
    <property type="match status" value="1"/>
</dbReference>
<dbReference type="PIRSF" id="PIRSF038945">
    <property type="entry name" value="Thr_synthase"/>
    <property type="match status" value="1"/>
</dbReference>
<dbReference type="SUPFAM" id="SSF53686">
    <property type="entry name" value="Tryptophan synthase beta subunit-like PLP-dependent enzymes"/>
    <property type="match status" value="1"/>
</dbReference>
<dbReference type="PROSITE" id="PS00165">
    <property type="entry name" value="DEHYDRATASE_SER_THR"/>
    <property type="match status" value="1"/>
</dbReference>
<feature type="chain" id="PRO_0000185638" description="Threonine synthase">
    <location>
        <begin position="1"/>
        <end position="360"/>
    </location>
</feature>
<feature type="binding site" evidence="1">
    <location>
        <position position="95"/>
    </location>
    <ligand>
        <name>pyridoxal 5'-phosphate</name>
        <dbReference type="ChEBI" id="CHEBI:597326"/>
    </ligand>
</feature>
<feature type="binding site" evidence="1">
    <location>
        <begin position="196"/>
        <end position="200"/>
    </location>
    <ligand>
        <name>pyridoxal 5'-phosphate</name>
        <dbReference type="ChEBI" id="CHEBI:597326"/>
    </ligand>
</feature>
<feature type="binding site" evidence="1">
    <location>
        <position position="326"/>
    </location>
    <ligand>
        <name>pyridoxal 5'-phosphate</name>
        <dbReference type="ChEBI" id="CHEBI:597326"/>
    </ligand>
</feature>
<feature type="modified residue" description="N6-(pyridoxal phosphate)lysine" evidence="1">
    <location>
        <position position="69"/>
    </location>
</feature>
<evidence type="ECO:0000250" key="1"/>
<evidence type="ECO:0000305" key="2"/>
<protein>
    <recommendedName>
        <fullName>Threonine synthase</fullName>
        <ecNumber>4.2.3.1</ecNumber>
    </recommendedName>
</protein>
<name>THRC_MYCBO</name>